<protein>
    <recommendedName>
        <fullName>Probable Xaa-Pro aminopeptidase MAA_08947</fullName>
        <ecNumber>3.4.11.9</ecNumber>
    </recommendedName>
    <alternativeName>
        <fullName>Aminoacylproline aminopeptidase</fullName>
    </alternativeName>
    <alternativeName>
        <fullName>Prolidase</fullName>
    </alternativeName>
</protein>
<proteinExistence type="inferred from homology"/>
<keyword id="KW-0031">Aminopeptidase</keyword>
<keyword id="KW-0378">Hydrolase</keyword>
<keyword id="KW-0464">Manganese</keyword>
<keyword id="KW-0479">Metal-binding</keyword>
<keyword id="KW-0482">Metalloprotease</keyword>
<keyword id="KW-0645">Protease</keyword>
<gene>
    <name type="ORF">MAA_08947</name>
</gene>
<reference key="1">
    <citation type="journal article" date="2011" name="PLoS Genet.">
        <title>Genome sequencing and comparative transcriptomics of the model entomopathogenic fungi Metarhizium anisopliae and M. acridum.</title>
        <authorList>
            <person name="Gao Q."/>
            <person name="Jin K."/>
            <person name="Ying S.-H."/>
            <person name="Zhang Y."/>
            <person name="Xiao G."/>
            <person name="Shang Y."/>
            <person name="Duan Z."/>
            <person name="Hu X."/>
            <person name="Xie X.-Q."/>
            <person name="Zhou G."/>
            <person name="Peng G."/>
            <person name="Luo Z."/>
            <person name="Huang W."/>
            <person name="Wang B."/>
            <person name="Fang W."/>
            <person name="Wang S."/>
            <person name="Zhong Y."/>
            <person name="Ma L.-J."/>
            <person name="St Leger R.J."/>
            <person name="Zhao G.-P."/>
            <person name="Pei Y."/>
            <person name="Feng M.-G."/>
            <person name="Xia Y."/>
            <person name="Wang C."/>
        </authorList>
    </citation>
    <scope>NUCLEOTIDE SEQUENCE [LARGE SCALE GENOMIC DNA]</scope>
    <source>
        <strain>ARSEF 23 / ATCC MYA-3075</strain>
    </source>
</reference>
<reference key="2">
    <citation type="journal article" date="2014" name="Proc. Natl. Acad. Sci. U.S.A.">
        <title>Trajectory and genomic determinants of fungal-pathogen speciation and host adaptation.</title>
        <authorList>
            <person name="Hu X."/>
            <person name="Xiao G."/>
            <person name="Zheng P."/>
            <person name="Shang Y."/>
            <person name="Su Y."/>
            <person name="Zhang X."/>
            <person name="Liu X."/>
            <person name="Zhan S."/>
            <person name="St Leger R.J."/>
            <person name="Wang C."/>
        </authorList>
    </citation>
    <scope>GENOME REANNOTATION</scope>
    <source>
        <strain>ARSEF 23 / ATCC MYA-3075</strain>
    </source>
</reference>
<comment type="function">
    <text evidence="1">Catalyzes the removal of a penultimate prolyl residue from the N-termini of peptides.</text>
</comment>
<comment type="catalytic activity">
    <reaction>
        <text>Release of any N-terminal amino acid, including proline, that is linked to proline, even from a dipeptide or tripeptide.</text>
        <dbReference type="EC" id="3.4.11.9"/>
    </reaction>
</comment>
<comment type="cofactor">
    <cofactor evidence="1">
        <name>Mn(2+)</name>
        <dbReference type="ChEBI" id="CHEBI:29035"/>
    </cofactor>
    <text evidence="1">Binds 2 manganese ions per subunit.</text>
</comment>
<comment type="similarity">
    <text evidence="2">Belongs to the peptidase M24B family.</text>
</comment>
<evidence type="ECO:0000250" key="1"/>
<evidence type="ECO:0000305" key="2"/>
<accession>E9F9J8</accession>
<feature type="chain" id="PRO_0000411838" description="Probable Xaa-Pro aminopeptidase MAA_08947">
    <location>
        <begin position="1"/>
        <end position="511"/>
    </location>
</feature>
<feature type="binding site" evidence="1">
    <location>
        <position position="275"/>
    </location>
    <ligand>
        <name>Mn(2+)</name>
        <dbReference type="ChEBI" id="CHEBI:29035"/>
        <label>2</label>
    </ligand>
</feature>
<feature type="binding site" evidence="1">
    <location>
        <position position="286"/>
    </location>
    <ligand>
        <name>Mn(2+)</name>
        <dbReference type="ChEBI" id="CHEBI:29035"/>
        <label>1</label>
    </ligand>
</feature>
<feature type="binding site" evidence="1">
    <location>
        <position position="286"/>
    </location>
    <ligand>
        <name>Mn(2+)</name>
        <dbReference type="ChEBI" id="CHEBI:29035"/>
        <label>2</label>
    </ligand>
</feature>
<feature type="binding site" evidence="1">
    <location>
        <position position="439"/>
    </location>
    <ligand>
        <name>Mn(2+)</name>
        <dbReference type="ChEBI" id="CHEBI:29035"/>
        <label>1</label>
    </ligand>
</feature>
<feature type="binding site" evidence="1">
    <location>
        <position position="480"/>
    </location>
    <ligand>
        <name>Mn(2+)</name>
        <dbReference type="ChEBI" id="CHEBI:29035"/>
        <label>1</label>
    </ligand>
</feature>
<feature type="binding site" evidence="1">
    <location>
        <position position="480"/>
    </location>
    <ligand>
        <name>Mn(2+)</name>
        <dbReference type="ChEBI" id="CHEBI:29035"/>
        <label>2</label>
    </ligand>
</feature>
<sequence length="511" mass="56420">MEMDYDLVMEDEFDALCLDVRRHHDSTSKTKYPAKLHARKVVRELGVDDGLIYLPGQPEISLEDSDQPRLFRQRRYFFYITGANFEDCTATYEVKHDKLTLWIPYVEPRQVLWFGSKPSAAECKRRYDVDEVRYTTQLSGFLRSFAAQPSPPVTYILHPKQAPDLGHGSQSQLCLDSSLLLPAMDRARVVKSDYEVAMVRRANNISSAAHRRVAERILRLTNEREIEAIIQAVCIASGSRSQAYPIIAGSGANGATLHYGSNNASLGGKQCVVIDAGCEWNCYASDITRTLPLSGAWTPKAAAIHAIVQRMQDECIAKVGPGAAWREIHLHAASVGMEGLLGLGILKGRREDVARAGTVAAFFPHGLGHHVGLDVHDVSGTLALSAAEGRGQQLDFGKRAMVTPSMLADMTRVSSSQDAVGGGQSKTQLLLPNMIVTVEPGIYFCREYLEGYFRSDPAHADFIDWDLLEEYYDVGGVRIEDCILVTEDGYENLTVAPKGDELLDVINKGKK</sequence>
<dbReference type="EC" id="3.4.11.9"/>
<dbReference type="EMBL" id="ADNJ02000007">
    <property type="protein sequence ID" value="EFY95651.2"/>
    <property type="molecule type" value="Genomic_DNA"/>
</dbReference>
<dbReference type="RefSeq" id="XP_007825136.2">
    <property type="nucleotide sequence ID" value="XM_007826945.2"/>
</dbReference>
<dbReference type="SMR" id="E9F9J8"/>
<dbReference type="GeneID" id="19263233"/>
<dbReference type="KEGG" id="maj:MAA_08947"/>
<dbReference type="HOGENOM" id="CLU_017266_1_2_1"/>
<dbReference type="OrthoDB" id="10261878at2759"/>
<dbReference type="Proteomes" id="UP000002498">
    <property type="component" value="Unassembled WGS sequence"/>
</dbReference>
<dbReference type="GO" id="GO:0030145">
    <property type="term" value="F:manganese ion binding"/>
    <property type="evidence" value="ECO:0007669"/>
    <property type="project" value="InterPro"/>
</dbReference>
<dbReference type="GO" id="GO:0070006">
    <property type="term" value="F:metalloaminopeptidase activity"/>
    <property type="evidence" value="ECO:0007669"/>
    <property type="project" value="InterPro"/>
</dbReference>
<dbReference type="GO" id="GO:0006508">
    <property type="term" value="P:proteolysis"/>
    <property type="evidence" value="ECO:0007669"/>
    <property type="project" value="UniProtKB-KW"/>
</dbReference>
<dbReference type="CDD" id="cd01087">
    <property type="entry name" value="Prolidase"/>
    <property type="match status" value="1"/>
</dbReference>
<dbReference type="Gene3D" id="3.90.230.10">
    <property type="entry name" value="Creatinase/methionine aminopeptidase superfamily"/>
    <property type="match status" value="1"/>
</dbReference>
<dbReference type="Gene3D" id="3.40.350.10">
    <property type="entry name" value="Creatinase/prolidase N-terminal domain"/>
    <property type="match status" value="1"/>
</dbReference>
<dbReference type="InterPro" id="IPR007865">
    <property type="entry name" value="Aminopep_P_N"/>
</dbReference>
<dbReference type="InterPro" id="IPR029149">
    <property type="entry name" value="Creatin/AminoP/Spt16_N"/>
</dbReference>
<dbReference type="InterPro" id="IPR036005">
    <property type="entry name" value="Creatinase/aminopeptidase-like"/>
</dbReference>
<dbReference type="InterPro" id="IPR000994">
    <property type="entry name" value="Pept_M24"/>
</dbReference>
<dbReference type="InterPro" id="IPR001131">
    <property type="entry name" value="Peptidase_M24B_aminopep-P_CS"/>
</dbReference>
<dbReference type="InterPro" id="IPR052433">
    <property type="entry name" value="X-Pro_dipept-like"/>
</dbReference>
<dbReference type="PANTHER" id="PTHR43226">
    <property type="entry name" value="XAA-PRO AMINOPEPTIDASE 3"/>
    <property type="match status" value="1"/>
</dbReference>
<dbReference type="PANTHER" id="PTHR43226:SF3">
    <property type="entry name" value="XAA-PRO AMINOPEPTIDASE AN0832-RELATED"/>
    <property type="match status" value="1"/>
</dbReference>
<dbReference type="Pfam" id="PF05195">
    <property type="entry name" value="AMP_N"/>
    <property type="match status" value="1"/>
</dbReference>
<dbReference type="Pfam" id="PF00557">
    <property type="entry name" value="Peptidase_M24"/>
    <property type="match status" value="1"/>
</dbReference>
<dbReference type="SMART" id="SM01011">
    <property type="entry name" value="AMP_N"/>
    <property type="match status" value="1"/>
</dbReference>
<dbReference type="SUPFAM" id="SSF55920">
    <property type="entry name" value="Creatinase/aminopeptidase"/>
    <property type="match status" value="1"/>
</dbReference>
<dbReference type="SUPFAM" id="SSF53092">
    <property type="entry name" value="Creatinase/prolidase N-terminal domain"/>
    <property type="match status" value="1"/>
</dbReference>
<dbReference type="PROSITE" id="PS00491">
    <property type="entry name" value="PROLINE_PEPTIDASE"/>
    <property type="match status" value="1"/>
</dbReference>
<name>AMPP2_METRA</name>
<organism>
    <name type="scientific">Metarhizium robertsii (strain ARSEF 23 / ATCC MYA-3075)</name>
    <name type="common">Metarhizium anisopliae (strain ARSEF 23)</name>
    <dbReference type="NCBI Taxonomy" id="655844"/>
    <lineage>
        <taxon>Eukaryota</taxon>
        <taxon>Fungi</taxon>
        <taxon>Dikarya</taxon>
        <taxon>Ascomycota</taxon>
        <taxon>Pezizomycotina</taxon>
        <taxon>Sordariomycetes</taxon>
        <taxon>Hypocreomycetidae</taxon>
        <taxon>Hypocreales</taxon>
        <taxon>Clavicipitaceae</taxon>
        <taxon>Metarhizium</taxon>
    </lineage>
</organism>